<reference key="1">
    <citation type="book" date="2006" name="Gram positive pathogens, 2nd edition">
        <title>The Staphylococcus aureus NCTC 8325 genome.</title>
        <editorList>
            <person name="Fischetti V."/>
            <person name="Novick R."/>
            <person name="Ferretti J."/>
            <person name="Portnoy D."/>
            <person name="Rood J."/>
        </editorList>
        <authorList>
            <person name="Gillaspy A.F."/>
            <person name="Worrell V."/>
            <person name="Orvis J."/>
            <person name="Roe B.A."/>
            <person name="Dyer D.W."/>
            <person name="Iandolo J.J."/>
        </authorList>
    </citation>
    <scope>NUCLEOTIDE SEQUENCE [LARGE SCALE GENOMIC DNA]</scope>
    <source>
        <strain>NCTC 8325 / PS 47</strain>
    </source>
</reference>
<comment type="catalytic activity">
    <reaction evidence="1">
        <text>beta-D-fructose 1,6-bisphosphate + H2O = beta-D-fructose 6-phosphate + phosphate</text>
        <dbReference type="Rhea" id="RHEA:11064"/>
        <dbReference type="ChEBI" id="CHEBI:15377"/>
        <dbReference type="ChEBI" id="CHEBI:32966"/>
        <dbReference type="ChEBI" id="CHEBI:43474"/>
        <dbReference type="ChEBI" id="CHEBI:57634"/>
        <dbReference type="EC" id="3.1.3.11"/>
    </reaction>
</comment>
<comment type="cofactor">
    <cofactor evidence="1">
        <name>Mn(2+)</name>
        <dbReference type="ChEBI" id="CHEBI:29035"/>
    </cofactor>
</comment>
<comment type="pathway">
    <text evidence="1">Carbohydrate biosynthesis; gluconeogenesis.</text>
</comment>
<comment type="similarity">
    <text evidence="1">Belongs to the FBPase class 3 family.</text>
</comment>
<proteinExistence type="inferred from homology"/>
<name>F16PC_STAA8</name>
<accession>Q2FVB2</accession>
<protein>
    <recommendedName>
        <fullName evidence="1">Fructose-1,6-bisphosphatase class 3</fullName>
        <shortName evidence="1">FBPase class 3</shortName>
        <ecNumber evidence="1">3.1.3.11</ecNumber>
    </recommendedName>
    <alternativeName>
        <fullName evidence="1">D-fructose-1,6-bisphosphate 1-phosphohydrolase class 3</fullName>
    </alternativeName>
</protein>
<sequence>MTQITEKELKKKYLDLLSQNFDTPEKLATEIINLESILELPKGTEHFVSDLHGEYEAFQHVLRNGSGNVRAKINDIFKERLSTKELNDLTALVYYPEDKLKLIKSDFQNCGQLNVWYITTIEHLIELIKYCSSKYTRSKLRKALPKQYVYIIEELLYKSNEYQNKKSYYETLVNQVIELKQADDLIIGLAYSVQRLVVDHLHVVGDIYDRGPQPDKIMDTLINYHSLDIQWGNHDVLWVGAYAGSKVCLANLLRICARYDNLDIIEDAYGINLRPLLTLAEKYYDADNPAFKPKKRPDKHERLTQREESQITKIHQAIAMIQFKLEIPIIKRRPNFEMEERLVLEKVNYDTNEITVYGNTYPLKDTCFQTVNRDNPAELLPEEEEVMNKLLLSFQQSEKLRRHMSFLMRKGSLYLPYNGNLLIHGCIPVDENGEMESFEIDGHTYSGQELLDVFEYHVRKSFDEKENTDDLSTDLVWYLWTGKYSSLFGKRAMTTFERYFIADKASHKEEKNPYYHLREDVNMVRKMLSDFGLNPDEGRIINGHTPVKEINGEDPIKADGKMLVIDGGFSKAYQSTTGIAGYTLLYNSFGMQLVAHQQFNAKEKILSEGIDELSIKRVVDKELQRKKIRDTNIGKDLQAQIDILKMLMHDRYLD</sequence>
<keyword id="KW-0119">Carbohydrate metabolism</keyword>
<keyword id="KW-0378">Hydrolase</keyword>
<keyword id="KW-0464">Manganese</keyword>
<keyword id="KW-1185">Reference proteome</keyword>
<dbReference type="EC" id="3.1.3.11" evidence="1"/>
<dbReference type="EMBL" id="CP000253">
    <property type="protein sequence ID" value="ABD31824.1"/>
    <property type="molecule type" value="Genomic_DNA"/>
</dbReference>
<dbReference type="RefSeq" id="WP_000192168.1">
    <property type="nucleotide sequence ID" value="NZ_LS483365.1"/>
</dbReference>
<dbReference type="RefSeq" id="YP_501280.1">
    <property type="nucleotide sequence ID" value="NC_007795.1"/>
</dbReference>
<dbReference type="STRING" id="93061.SAOUHSC_02822"/>
<dbReference type="PaxDb" id="1280-SAXN108_2765"/>
<dbReference type="GeneID" id="3921261"/>
<dbReference type="KEGG" id="sao:SAOUHSC_02822"/>
<dbReference type="PATRIC" id="fig|93061.5.peg.2552"/>
<dbReference type="eggNOG" id="COG3855">
    <property type="taxonomic scope" value="Bacteria"/>
</dbReference>
<dbReference type="HOGENOM" id="CLU_028392_2_0_9"/>
<dbReference type="OrthoDB" id="9779903at2"/>
<dbReference type="UniPathway" id="UPA00138"/>
<dbReference type="PRO" id="PR:Q2FVB2"/>
<dbReference type="Proteomes" id="UP000008816">
    <property type="component" value="Chromosome"/>
</dbReference>
<dbReference type="GO" id="GO:0042132">
    <property type="term" value="F:fructose 1,6-bisphosphate 1-phosphatase activity"/>
    <property type="evidence" value="ECO:0007669"/>
    <property type="project" value="UniProtKB-UniRule"/>
</dbReference>
<dbReference type="GO" id="GO:0006094">
    <property type="term" value="P:gluconeogenesis"/>
    <property type="evidence" value="ECO:0007669"/>
    <property type="project" value="UniProtKB-UniRule"/>
</dbReference>
<dbReference type="Gene3D" id="3.60.21.10">
    <property type="match status" value="1"/>
</dbReference>
<dbReference type="HAMAP" id="MF_01854">
    <property type="entry name" value="FBPase_class3"/>
    <property type="match status" value="1"/>
</dbReference>
<dbReference type="InterPro" id="IPR009164">
    <property type="entry name" value="FBPtase_class3"/>
</dbReference>
<dbReference type="InterPro" id="IPR029052">
    <property type="entry name" value="Metallo-depent_PP-like"/>
</dbReference>
<dbReference type="Pfam" id="PF06874">
    <property type="entry name" value="FBPase_2"/>
    <property type="match status" value="1"/>
</dbReference>
<dbReference type="PIRSF" id="PIRSF000906">
    <property type="entry name" value="FBPtase_Bacill"/>
    <property type="match status" value="1"/>
</dbReference>
<dbReference type="SUPFAM" id="SSF56300">
    <property type="entry name" value="Metallo-dependent phosphatases"/>
    <property type="match status" value="2"/>
</dbReference>
<organism>
    <name type="scientific">Staphylococcus aureus (strain NCTC 8325 / PS 47)</name>
    <dbReference type="NCBI Taxonomy" id="93061"/>
    <lineage>
        <taxon>Bacteria</taxon>
        <taxon>Bacillati</taxon>
        <taxon>Bacillota</taxon>
        <taxon>Bacilli</taxon>
        <taxon>Bacillales</taxon>
        <taxon>Staphylococcaceae</taxon>
        <taxon>Staphylococcus</taxon>
    </lineage>
</organism>
<evidence type="ECO:0000255" key="1">
    <source>
        <dbReference type="HAMAP-Rule" id="MF_01854"/>
    </source>
</evidence>
<evidence type="ECO:0000256" key="2">
    <source>
        <dbReference type="SAM" id="MobiDB-lite"/>
    </source>
</evidence>
<gene>
    <name evidence="1" type="primary">fbp</name>
    <name type="ordered locus">SAOUHSC_02822</name>
</gene>
<feature type="chain" id="PRO_0000359992" description="Fructose-1,6-bisphosphatase class 3">
    <location>
        <begin position="1"/>
        <end position="654"/>
    </location>
</feature>
<feature type="region of interest" description="Disordered" evidence="2">
    <location>
        <begin position="288"/>
        <end position="307"/>
    </location>
</feature>
<feature type="compositionally biased region" description="Basic and acidic residues" evidence="2">
    <location>
        <begin position="298"/>
        <end position="307"/>
    </location>
</feature>